<proteinExistence type="evidence at protein level"/>
<name>YKZ1_YEAST</name>
<gene>
    <name type="ordered locus">YKR011C</name>
    <name type="ORF">YK110</name>
</gene>
<comment type="miscellaneous">
    <text evidence="2">Present with 3150 molecules/cell in log phase SD medium.</text>
</comment>
<keyword id="KW-1185">Reference proteome</keyword>
<protein>
    <recommendedName>
        <fullName>Uncharacterized protein YKR011C</fullName>
    </recommendedName>
</protein>
<dbReference type="EMBL" id="X65124">
    <property type="protein sequence ID" value="CAA46241.1"/>
    <property type="molecule type" value="Genomic_DNA"/>
</dbReference>
<dbReference type="EMBL" id="Z28236">
    <property type="protein sequence ID" value="CAA82081.1"/>
    <property type="molecule type" value="Genomic_DNA"/>
</dbReference>
<dbReference type="EMBL" id="BK006944">
    <property type="protein sequence ID" value="DAA09167.1"/>
    <property type="molecule type" value="Genomic_DNA"/>
</dbReference>
<dbReference type="PIR" id="S38080">
    <property type="entry name" value="S38080"/>
</dbReference>
<dbReference type="SMR" id="Q02209"/>
<dbReference type="BioGRID" id="34144">
    <property type="interactions" value="51"/>
</dbReference>
<dbReference type="DIP" id="DIP-1923N"/>
<dbReference type="FunCoup" id="Q02209">
    <property type="interactions" value="72"/>
</dbReference>
<dbReference type="IntAct" id="Q02209">
    <property type="interactions" value="4"/>
</dbReference>
<dbReference type="MINT" id="Q02209"/>
<dbReference type="STRING" id="4932.YKR011C"/>
<dbReference type="iPTMnet" id="Q02209"/>
<dbReference type="PaxDb" id="4932-YKR011C"/>
<dbReference type="PeptideAtlas" id="Q02209"/>
<dbReference type="EnsemblFungi" id="YKR011C_mRNA">
    <property type="protein sequence ID" value="YKR011C"/>
    <property type="gene ID" value="YKR011C"/>
</dbReference>
<dbReference type="KEGG" id="sce:YKR011C"/>
<dbReference type="AGR" id="SGD:S000001719"/>
<dbReference type="SGD" id="S000001719">
    <property type="gene designation" value="YKR011C"/>
</dbReference>
<dbReference type="VEuPathDB" id="FungiDB:YKR011C"/>
<dbReference type="eggNOG" id="ENOG502RZH0">
    <property type="taxonomic scope" value="Eukaryota"/>
</dbReference>
<dbReference type="HOGENOM" id="CLU_079711_0_0_1"/>
<dbReference type="InParanoid" id="Q02209"/>
<dbReference type="OMA" id="MEELYVY"/>
<dbReference type="OrthoDB" id="4070108at2759"/>
<dbReference type="BioCyc" id="YEAST:G3O-31988-MONOMER"/>
<dbReference type="BioGRID-ORCS" id="853881">
    <property type="hits" value="0 hits in 10 CRISPR screens"/>
</dbReference>
<dbReference type="PRO" id="PR:Q02209"/>
<dbReference type="Proteomes" id="UP000002311">
    <property type="component" value="Chromosome XI"/>
</dbReference>
<dbReference type="RNAct" id="Q02209">
    <property type="molecule type" value="protein"/>
</dbReference>
<dbReference type="GO" id="GO:0005634">
    <property type="term" value="C:nucleus"/>
    <property type="evidence" value="ECO:0007005"/>
    <property type="project" value="SGD"/>
</dbReference>
<dbReference type="GO" id="GO:0031669">
    <property type="term" value="P:cellular response to nutrient levels"/>
    <property type="evidence" value="ECO:0000314"/>
    <property type="project" value="SGD"/>
</dbReference>
<feature type="chain" id="PRO_0000203194" description="Uncharacterized protein YKR011C">
    <location>
        <begin position="1"/>
        <end position="353"/>
    </location>
</feature>
<feature type="region of interest" description="Disordered" evidence="1">
    <location>
        <begin position="233"/>
        <end position="265"/>
    </location>
</feature>
<feature type="compositionally biased region" description="Polar residues" evidence="1">
    <location>
        <begin position="233"/>
        <end position="245"/>
    </location>
</feature>
<feature type="compositionally biased region" description="Low complexity" evidence="1">
    <location>
        <begin position="252"/>
        <end position="263"/>
    </location>
</feature>
<organism>
    <name type="scientific">Saccharomyces cerevisiae (strain ATCC 204508 / S288c)</name>
    <name type="common">Baker's yeast</name>
    <dbReference type="NCBI Taxonomy" id="559292"/>
    <lineage>
        <taxon>Eukaryota</taxon>
        <taxon>Fungi</taxon>
        <taxon>Dikarya</taxon>
        <taxon>Ascomycota</taxon>
        <taxon>Saccharomycotina</taxon>
        <taxon>Saccharomycetes</taxon>
        <taxon>Saccharomycetales</taxon>
        <taxon>Saccharomycetaceae</taxon>
        <taxon>Saccharomyces</taxon>
    </lineage>
</organism>
<evidence type="ECO:0000256" key="1">
    <source>
        <dbReference type="SAM" id="MobiDB-lite"/>
    </source>
</evidence>
<evidence type="ECO:0000269" key="2">
    <source>
    </source>
</evidence>
<reference key="1">
    <citation type="journal article" date="1994" name="Nature">
        <title>Complete DNA sequence of yeast chromosome XI.</title>
        <authorList>
            <person name="Dujon B."/>
            <person name="Alexandraki D."/>
            <person name="Andre B."/>
            <person name="Ansorge W."/>
            <person name="Baladron V."/>
            <person name="Ballesta J.P.G."/>
            <person name="Banrevi A."/>
            <person name="Bolle P.-A."/>
            <person name="Bolotin-Fukuhara M."/>
            <person name="Bossier P."/>
            <person name="Bou G."/>
            <person name="Boyer J."/>
            <person name="Buitrago M.J."/>
            <person name="Cheret G."/>
            <person name="Colleaux L."/>
            <person name="Daignan-Fornier B."/>
            <person name="del Rey F."/>
            <person name="Dion C."/>
            <person name="Domdey H."/>
            <person name="Duesterhoeft A."/>
            <person name="Duesterhus S."/>
            <person name="Entian K.-D."/>
            <person name="Erfle H."/>
            <person name="Esteban P.F."/>
            <person name="Feldmann H."/>
            <person name="Fernandes L."/>
            <person name="Fobo G.M."/>
            <person name="Fritz C."/>
            <person name="Fukuhara H."/>
            <person name="Gabel C."/>
            <person name="Gaillon L."/>
            <person name="Garcia-Cantalejo J.M."/>
            <person name="Garcia-Ramirez J.J."/>
            <person name="Gent M.E."/>
            <person name="Ghazvini M."/>
            <person name="Goffeau A."/>
            <person name="Gonzalez A."/>
            <person name="Grothues D."/>
            <person name="Guerreiro P."/>
            <person name="Hegemann J.H."/>
            <person name="Hewitt N."/>
            <person name="Hilger F."/>
            <person name="Hollenberg C.P."/>
            <person name="Horaitis O."/>
            <person name="Indge K.J."/>
            <person name="Jacquier A."/>
            <person name="James C.M."/>
            <person name="Jauniaux J.-C."/>
            <person name="Jimenez A."/>
            <person name="Keuchel H."/>
            <person name="Kirchrath L."/>
            <person name="Kleine K."/>
            <person name="Koetter P."/>
            <person name="Legrain P."/>
            <person name="Liebl S."/>
            <person name="Louis E.J."/>
            <person name="Maia e Silva A."/>
            <person name="Marck C."/>
            <person name="Monnier A.-L."/>
            <person name="Moestl D."/>
            <person name="Mueller S."/>
            <person name="Obermaier B."/>
            <person name="Oliver S.G."/>
            <person name="Pallier C."/>
            <person name="Pascolo S."/>
            <person name="Pfeiffer F."/>
            <person name="Philippsen P."/>
            <person name="Planta R.J."/>
            <person name="Pohl F.M."/>
            <person name="Pohl T.M."/>
            <person name="Poehlmann R."/>
            <person name="Portetelle D."/>
            <person name="Purnelle B."/>
            <person name="Puzos V."/>
            <person name="Ramezani Rad M."/>
            <person name="Rasmussen S.W."/>
            <person name="Remacha M.A."/>
            <person name="Revuelta J.L."/>
            <person name="Richard G.-F."/>
            <person name="Rieger M."/>
            <person name="Rodrigues-Pousada C."/>
            <person name="Rose M."/>
            <person name="Rupp T."/>
            <person name="Santos M.A."/>
            <person name="Schwager C."/>
            <person name="Sensen C."/>
            <person name="Skala J."/>
            <person name="Soares H."/>
            <person name="Sor F."/>
            <person name="Stegemann J."/>
            <person name="Tettelin H."/>
            <person name="Thierry A."/>
            <person name="Tzermia M."/>
            <person name="Urrestarazu L.A."/>
            <person name="van Dyck L."/>
            <person name="van Vliet-Reedijk J.C."/>
            <person name="Valens M."/>
            <person name="Vandenbol M."/>
            <person name="Vilela C."/>
            <person name="Vissers S."/>
            <person name="von Wettstein D."/>
            <person name="Voss H."/>
            <person name="Wiemann S."/>
            <person name="Xu G."/>
            <person name="Zimmermann J."/>
            <person name="Haasemann M."/>
            <person name="Becker I."/>
            <person name="Mewes H.-W."/>
        </authorList>
    </citation>
    <scope>NUCLEOTIDE SEQUENCE [LARGE SCALE GENOMIC DNA]</scope>
    <source>
        <strain>ATCC 204508 / S288c</strain>
    </source>
</reference>
<reference key="2">
    <citation type="journal article" date="2014" name="G3 (Bethesda)">
        <title>The reference genome sequence of Saccharomyces cerevisiae: Then and now.</title>
        <authorList>
            <person name="Engel S.R."/>
            <person name="Dietrich F.S."/>
            <person name="Fisk D.G."/>
            <person name="Binkley G."/>
            <person name="Balakrishnan R."/>
            <person name="Costanzo M.C."/>
            <person name="Dwight S.S."/>
            <person name="Hitz B.C."/>
            <person name="Karra K."/>
            <person name="Nash R.S."/>
            <person name="Weng S."/>
            <person name="Wong E.D."/>
            <person name="Lloyd P."/>
            <person name="Skrzypek M.S."/>
            <person name="Miyasato S.R."/>
            <person name="Simison M."/>
            <person name="Cherry J.M."/>
        </authorList>
    </citation>
    <scope>GENOME REANNOTATION</scope>
    <source>
        <strain>ATCC 204508 / S288c</strain>
    </source>
</reference>
<reference key="3">
    <citation type="journal article" date="1992" name="Yeast">
        <title>DNA sequencing and analysis of a 24.7 kb segment encompassing centromere CEN11 of Saccharomyces cerevisiae reveals nine previously unknown open reading frames.</title>
        <authorList>
            <person name="Duesterhoeft A."/>
            <person name="Philippsen P."/>
        </authorList>
    </citation>
    <scope>NUCLEOTIDE SEQUENCE [GENOMIC DNA] OF 141-353</scope>
    <source>
        <strain>ATCC 204508 / S288c</strain>
    </source>
</reference>
<reference key="4">
    <citation type="journal article" date="2003" name="Nature">
        <title>Global analysis of protein expression in yeast.</title>
        <authorList>
            <person name="Ghaemmaghami S."/>
            <person name="Huh W.-K."/>
            <person name="Bower K."/>
            <person name="Howson R.W."/>
            <person name="Belle A."/>
            <person name="Dephoure N."/>
            <person name="O'Shea E.K."/>
            <person name="Weissman J.S."/>
        </authorList>
    </citation>
    <scope>LEVEL OF PROTEIN EXPRESSION [LARGE SCALE ANALYSIS]</scope>
</reference>
<reference key="5">
    <citation type="journal article" date="2009" name="Science">
        <title>Global analysis of Cdk1 substrate phosphorylation sites provides insights into evolution.</title>
        <authorList>
            <person name="Holt L.J."/>
            <person name="Tuch B.B."/>
            <person name="Villen J."/>
            <person name="Johnson A.D."/>
            <person name="Gygi S.P."/>
            <person name="Morgan D.O."/>
        </authorList>
    </citation>
    <scope>IDENTIFICATION BY MASS SPECTROMETRY [LARGE SCALE ANALYSIS]</scope>
</reference>
<sequence length="353" mass="41300">MSKLETVYLYAGEEQPRVKLTCIKEGLTLTQVIKFVHSIQELYGIELQTSETITENLKIDCAPAYLKPNCIPHFYILEYEEISDTFFIWKSDGRWQLNKLSALLYVDNDANVVKNTSWKEVFQNDQRFKNYDKRAWLQNCLEKMNRDLSKLNVEQFWSQYDKICQSIAKQKKKQEQFNMEVFDNFKNIVSIAIIKTKVLSNKRLLTTTLKNYHNSMKKKYNIQEQNLKENSLASCSNNEPSASLESESRHFSPVNSLSPSSLSTDDEAVSTDYIYKGPESKPNVNFMHSSATNDLIKSNFESYFKLMAEDYETFDLRAWSRQRPRKFQLVEKKKITKNPPNSHHPHKNGKISF</sequence>
<accession>Q02209</accession>
<accession>D6VX77</accession>